<dbReference type="EC" id="2.5.1.-" evidence="1"/>
<dbReference type="EMBL" id="AF124757">
    <property type="protein sequence ID" value="AAD29658.1"/>
    <property type="status" value="ALT_INIT"/>
    <property type="molecule type" value="Genomic_DNA"/>
</dbReference>
<dbReference type="EMBL" id="AE008692">
    <property type="protein sequence ID" value="AAV89776.2"/>
    <property type="molecule type" value="Genomic_DNA"/>
</dbReference>
<dbReference type="RefSeq" id="WP_011240979.1">
    <property type="nucleotide sequence ID" value="NZ_CP035711.1"/>
</dbReference>
<dbReference type="SMR" id="Q9X5F1"/>
<dbReference type="STRING" id="264203.ZMO1152"/>
<dbReference type="KEGG" id="zmo:ZMO1152"/>
<dbReference type="eggNOG" id="COG0020">
    <property type="taxonomic scope" value="Bacteria"/>
</dbReference>
<dbReference type="HOGENOM" id="CLU_038505_1_1_5"/>
<dbReference type="Proteomes" id="UP000001173">
    <property type="component" value="Chromosome"/>
</dbReference>
<dbReference type="GO" id="GO:0005829">
    <property type="term" value="C:cytosol"/>
    <property type="evidence" value="ECO:0007669"/>
    <property type="project" value="TreeGrafter"/>
</dbReference>
<dbReference type="GO" id="GO:0008834">
    <property type="term" value="F:ditrans,polycis-undecaprenyl-diphosphate synthase [(2E,6E)-farnesyl-diphosphate specific] activity"/>
    <property type="evidence" value="ECO:0007669"/>
    <property type="project" value="TreeGrafter"/>
</dbReference>
<dbReference type="GO" id="GO:0000287">
    <property type="term" value="F:magnesium ion binding"/>
    <property type="evidence" value="ECO:0007669"/>
    <property type="project" value="UniProtKB-UniRule"/>
</dbReference>
<dbReference type="GO" id="GO:0016094">
    <property type="term" value="P:polyprenol biosynthetic process"/>
    <property type="evidence" value="ECO:0007669"/>
    <property type="project" value="TreeGrafter"/>
</dbReference>
<dbReference type="CDD" id="cd00475">
    <property type="entry name" value="Cis_IPPS"/>
    <property type="match status" value="1"/>
</dbReference>
<dbReference type="FunFam" id="3.40.1180.10:FF:000001">
    <property type="entry name" value="(2E,6E)-farnesyl-diphosphate-specific ditrans,polycis-undecaprenyl-diphosphate synthase"/>
    <property type="match status" value="1"/>
</dbReference>
<dbReference type="Gene3D" id="3.40.1180.10">
    <property type="entry name" value="Decaprenyl diphosphate synthase-like"/>
    <property type="match status" value="1"/>
</dbReference>
<dbReference type="HAMAP" id="MF_01139">
    <property type="entry name" value="ISPT"/>
    <property type="match status" value="1"/>
</dbReference>
<dbReference type="InterPro" id="IPR001441">
    <property type="entry name" value="UPP_synth-like"/>
</dbReference>
<dbReference type="InterPro" id="IPR018520">
    <property type="entry name" value="UPP_synth-like_CS"/>
</dbReference>
<dbReference type="InterPro" id="IPR036424">
    <property type="entry name" value="UPP_synth-like_sf"/>
</dbReference>
<dbReference type="NCBIfam" id="NF011405">
    <property type="entry name" value="PRK14830.1"/>
    <property type="match status" value="1"/>
</dbReference>
<dbReference type="NCBIfam" id="NF011408">
    <property type="entry name" value="PRK14834.1"/>
    <property type="match status" value="1"/>
</dbReference>
<dbReference type="NCBIfam" id="TIGR00055">
    <property type="entry name" value="uppS"/>
    <property type="match status" value="1"/>
</dbReference>
<dbReference type="PANTHER" id="PTHR10291:SF0">
    <property type="entry name" value="DEHYDRODOLICHYL DIPHOSPHATE SYNTHASE 2"/>
    <property type="match status" value="1"/>
</dbReference>
<dbReference type="PANTHER" id="PTHR10291">
    <property type="entry name" value="DEHYDRODOLICHYL DIPHOSPHATE SYNTHASE FAMILY MEMBER"/>
    <property type="match status" value="1"/>
</dbReference>
<dbReference type="Pfam" id="PF01255">
    <property type="entry name" value="Prenyltransf"/>
    <property type="match status" value="1"/>
</dbReference>
<dbReference type="SUPFAM" id="SSF64005">
    <property type="entry name" value="Undecaprenyl diphosphate synthase"/>
    <property type="match status" value="1"/>
</dbReference>
<dbReference type="PROSITE" id="PS01066">
    <property type="entry name" value="UPP_SYNTHASE"/>
    <property type="match status" value="1"/>
</dbReference>
<comment type="function">
    <text evidence="1">Catalyzes the condensation of isopentenyl diphosphate (IPP) with allylic pyrophosphates generating different type of terpenoids.</text>
</comment>
<comment type="cofactor">
    <cofactor evidence="1">
        <name>Mg(2+)</name>
        <dbReference type="ChEBI" id="CHEBI:18420"/>
    </cofactor>
    <text evidence="1">Binds 2 magnesium ions per subunit.</text>
</comment>
<comment type="subunit">
    <text evidence="1">Homodimer.</text>
</comment>
<comment type="similarity">
    <text evidence="1">Belongs to the UPP synthase family.</text>
</comment>
<comment type="sequence caution" evidence="2">
    <conflict type="erroneous initiation">
        <sequence resource="EMBL-CDS" id="AAD29658"/>
    </conflict>
    <text>Extended N-terminus.</text>
</comment>
<keyword id="KW-0460">Magnesium</keyword>
<keyword id="KW-0479">Metal-binding</keyword>
<keyword id="KW-1185">Reference proteome</keyword>
<keyword id="KW-0808">Transferase</keyword>
<evidence type="ECO:0000255" key="1">
    <source>
        <dbReference type="HAMAP-Rule" id="MF_01139"/>
    </source>
</evidence>
<evidence type="ECO:0000305" key="2"/>
<proteinExistence type="inferred from homology"/>
<protein>
    <recommendedName>
        <fullName evidence="1">Isoprenyl transferase</fullName>
        <ecNumber evidence="1">2.5.1.-</ecNumber>
    </recommendedName>
</protein>
<name>ISPT_ZYMMO</name>
<sequence>MIAPLANSAVKPHKSASFVPRHVAIIMDGNGRWASARHLPRIAGHKKGADAVKTTVRAAAEMGIEVLTLYAFSSENWRRPASEVADLMGLLRLCLRQEMHNIKERGICLKVIGDYTRLDQDLVALLNQAIEITANNTRLTLVFALNYGAQDELVHVTKRIAEKAKEGQLDPENIDVGTIESLLYTHDLPPLDLVIRTSGEKRLSNFLLWQAAYAELLFIDTLWPDFGSETLKAAVEEYARRERRYGGL</sequence>
<feature type="chain" id="PRO_0000123725" description="Isoprenyl transferase">
    <location>
        <begin position="1"/>
        <end position="248"/>
    </location>
</feature>
<feature type="active site" evidence="1">
    <location>
        <position position="28"/>
    </location>
</feature>
<feature type="active site" description="Proton acceptor" evidence="1">
    <location>
        <position position="76"/>
    </location>
</feature>
<feature type="binding site" evidence="1">
    <location>
        <position position="28"/>
    </location>
    <ligand>
        <name>Mg(2+)</name>
        <dbReference type="ChEBI" id="CHEBI:18420"/>
    </ligand>
</feature>
<feature type="binding site" evidence="1">
    <location>
        <begin position="29"/>
        <end position="32"/>
    </location>
    <ligand>
        <name>substrate</name>
    </ligand>
</feature>
<feature type="binding site" evidence="1">
    <location>
        <position position="33"/>
    </location>
    <ligand>
        <name>substrate</name>
    </ligand>
</feature>
<feature type="binding site" evidence="1">
    <location>
        <position position="41"/>
    </location>
    <ligand>
        <name>substrate</name>
    </ligand>
</feature>
<feature type="binding site" evidence="1">
    <location>
        <position position="45"/>
    </location>
    <ligand>
        <name>substrate</name>
    </ligand>
</feature>
<feature type="binding site" evidence="1">
    <location>
        <begin position="73"/>
        <end position="75"/>
    </location>
    <ligand>
        <name>substrate</name>
    </ligand>
</feature>
<feature type="binding site" evidence="1">
    <location>
        <position position="77"/>
    </location>
    <ligand>
        <name>substrate</name>
    </ligand>
</feature>
<feature type="binding site" evidence="1">
    <location>
        <position position="79"/>
    </location>
    <ligand>
        <name>substrate</name>
    </ligand>
</feature>
<feature type="binding site" evidence="1">
    <location>
        <position position="196"/>
    </location>
    <ligand>
        <name>substrate</name>
    </ligand>
</feature>
<feature type="binding site" evidence="1">
    <location>
        <begin position="202"/>
        <end position="204"/>
    </location>
    <ligand>
        <name>substrate</name>
    </ligand>
</feature>
<feature type="binding site" evidence="1">
    <location>
        <position position="215"/>
    </location>
    <ligand>
        <name>Mg(2+)</name>
        <dbReference type="ChEBI" id="CHEBI:18420"/>
    </ligand>
</feature>
<gene>
    <name evidence="1" type="primary">uppS</name>
    <name type="ordered locus">ZMO1152</name>
</gene>
<organism>
    <name type="scientific">Zymomonas mobilis subsp. mobilis (strain ATCC 31821 / ZM4 / CP4)</name>
    <dbReference type="NCBI Taxonomy" id="264203"/>
    <lineage>
        <taxon>Bacteria</taxon>
        <taxon>Pseudomonadati</taxon>
        <taxon>Pseudomonadota</taxon>
        <taxon>Alphaproteobacteria</taxon>
        <taxon>Sphingomonadales</taxon>
        <taxon>Zymomonadaceae</taxon>
        <taxon>Zymomonas</taxon>
    </lineage>
</organism>
<accession>Q9X5F1</accession>
<accession>Q5NND4</accession>
<reference key="1">
    <citation type="submission" date="1999-01" db="EMBL/GenBank/DDBJ databases">
        <title>Sequence analysis of 43D2 fosmid clone of Zymomonas mobilis ZM4.</title>
        <authorList>
            <person name="Lee H.J."/>
            <person name="Kang H.S."/>
        </authorList>
    </citation>
    <scope>NUCLEOTIDE SEQUENCE [GENOMIC DNA]</scope>
    <source>
        <strain>ATCC 31821 / ZM4 / CP4</strain>
    </source>
</reference>
<reference key="2">
    <citation type="journal article" date="2005" name="Nat. Biotechnol.">
        <title>The genome sequence of the ethanologenic bacterium Zymomonas mobilis ZM4.</title>
        <authorList>
            <person name="Seo J.-S."/>
            <person name="Chong H."/>
            <person name="Park H.S."/>
            <person name="Yoon K.-O."/>
            <person name="Jung C."/>
            <person name="Kim J.J."/>
            <person name="Hong J.H."/>
            <person name="Kim H."/>
            <person name="Kim J.-H."/>
            <person name="Kil J.-I."/>
            <person name="Park C.J."/>
            <person name="Oh H.-M."/>
            <person name="Lee J.-S."/>
            <person name="Jin S.-J."/>
            <person name="Um H.-W."/>
            <person name="Lee H.-J."/>
            <person name="Oh S.-J."/>
            <person name="Kim J.Y."/>
            <person name="Kang H.L."/>
            <person name="Lee S.Y."/>
            <person name="Lee K.J."/>
            <person name="Kang H.S."/>
        </authorList>
    </citation>
    <scope>NUCLEOTIDE SEQUENCE [LARGE SCALE GENOMIC DNA]</scope>
    <source>
        <strain>ATCC 31821 / ZM4 / CP4</strain>
    </source>
</reference>